<proteinExistence type="inferred from homology"/>
<comment type="function">
    <text evidence="1">Has nucleoside phosphatase activity towards nucleoside triphosphates and nucleoside diphosphates.</text>
</comment>
<comment type="catalytic activity">
    <reaction evidence="1">
        <text>a ribonucleoside 5'-triphosphate + H2O = a ribonucleoside 5'-diphosphate + phosphate + H(+)</text>
        <dbReference type="Rhea" id="RHEA:23680"/>
        <dbReference type="ChEBI" id="CHEBI:15377"/>
        <dbReference type="ChEBI" id="CHEBI:15378"/>
        <dbReference type="ChEBI" id="CHEBI:43474"/>
        <dbReference type="ChEBI" id="CHEBI:57930"/>
        <dbReference type="ChEBI" id="CHEBI:61557"/>
        <dbReference type="EC" id="3.6.1.15"/>
    </reaction>
</comment>
<comment type="catalytic activity">
    <reaction evidence="1">
        <text>a ribonucleoside 5'-diphosphate + H2O = a ribonucleoside 5'-phosphate + phosphate + H(+)</text>
        <dbReference type="Rhea" id="RHEA:36799"/>
        <dbReference type="ChEBI" id="CHEBI:15377"/>
        <dbReference type="ChEBI" id="CHEBI:15378"/>
        <dbReference type="ChEBI" id="CHEBI:43474"/>
        <dbReference type="ChEBI" id="CHEBI:57930"/>
        <dbReference type="ChEBI" id="CHEBI:58043"/>
        <dbReference type="EC" id="3.6.1.6"/>
    </reaction>
</comment>
<comment type="cofactor">
    <cofactor evidence="1">
        <name>Mg(2+)</name>
        <dbReference type="ChEBI" id="CHEBI:18420"/>
    </cofactor>
</comment>
<comment type="similarity">
    <text evidence="1">Belongs to the Ntdp family.</text>
</comment>
<accession>Q8DSK1</accession>
<protein>
    <recommendedName>
        <fullName evidence="1">Nucleoside triphosphate/diphosphate phosphatase</fullName>
        <ecNumber evidence="1">3.6.1.15</ecNumber>
        <ecNumber evidence="1">3.6.1.6</ecNumber>
    </recommendedName>
</protein>
<keyword id="KW-0378">Hydrolase</keyword>
<keyword id="KW-0460">Magnesium</keyword>
<keyword id="KW-0479">Metal-binding</keyword>
<keyword id="KW-1185">Reference proteome</keyword>
<evidence type="ECO:0000255" key="1">
    <source>
        <dbReference type="HAMAP-Rule" id="MF_01568"/>
    </source>
</evidence>
<reference key="1">
    <citation type="journal article" date="2002" name="Proc. Natl. Acad. Sci. U.S.A.">
        <title>Genome sequence of Streptococcus mutans UA159, a cariogenic dental pathogen.</title>
        <authorList>
            <person name="Ajdic D.J."/>
            <person name="McShan W.M."/>
            <person name="McLaughlin R.E."/>
            <person name="Savic G."/>
            <person name="Chang J."/>
            <person name="Carson M.B."/>
            <person name="Primeaux C."/>
            <person name="Tian R."/>
            <person name="Kenton S."/>
            <person name="Jia H.G."/>
            <person name="Lin S.P."/>
            <person name="Qian Y."/>
            <person name="Li S."/>
            <person name="Zhu H."/>
            <person name="Najar F.Z."/>
            <person name="Lai H."/>
            <person name="White J."/>
            <person name="Roe B.A."/>
            <person name="Ferretti J.J."/>
        </authorList>
    </citation>
    <scope>NUCLEOTIDE SEQUENCE [LARGE SCALE GENOMIC DNA]</scope>
    <source>
        <strain>ATCC 700610 / UA159</strain>
    </source>
</reference>
<name>NTDP_STRMU</name>
<organism>
    <name type="scientific">Streptococcus mutans serotype c (strain ATCC 700610 / UA159)</name>
    <dbReference type="NCBI Taxonomy" id="210007"/>
    <lineage>
        <taxon>Bacteria</taxon>
        <taxon>Bacillati</taxon>
        <taxon>Bacillota</taxon>
        <taxon>Bacilli</taxon>
        <taxon>Lactobacillales</taxon>
        <taxon>Streptococcaceae</taxon>
        <taxon>Streptococcus</taxon>
    </lineage>
</organism>
<dbReference type="EC" id="3.6.1.15" evidence="1"/>
<dbReference type="EC" id="3.6.1.6" evidence="1"/>
<dbReference type="EMBL" id="AE014133">
    <property type="protein sequence ID" value="AAN59408.1"/>
    <property type="molecule type" value="Genomic_DNA"/>
</dbReference>
<dbReference type="RefSeq" id="NP_722102.1">
    <property type="nucleotide sequence ID" value="NC_004350.2"/>
</dbReference>
<dbReference type="RefSeq" id="WP_002263684.1">
    <property type="nucleotide sequence ID" value="NC_004350.2"/>
</dbReference>
<dbReference type="SMR" id="Q8DSK1"/>
<dbReference type="STRING" id="210007.SMU_1781"/>
<dbReference type="KEGG" id="smu:SMU_1781"/>
<dbReference type="PATRIC" id="fig|210007.7.peg.1589"/>
<dbReference type="eggNOG" id="COG3557">
    <property type="taxonomic scope" value="Bacteria"/>
</dbReference>
<dbReference type="HOGENOM" id="CLU_109787_1_0_9"/>
<dbReference type="OrthoDB" id="1645325at2"/>
<dbReference type="PhylomeDB" id="Q8DSK1"/>
<dbReference type="Proteomes" id="UP000002512">
    <property type="component" value="Chromosome"/>
</dbReference>
<dbReference type="GO" id="GO:0000287">
    <property type="term" value="F:magnesium ion binding"/>
    <property type="evidence" value="ECO:0007669"/>
    <property type="project" value="UniProtKB-UniRule"/>
</dbReference>
<dbReference type="GO" id="GO:0017110">
    <property type="term" value="F:nucleoside diphosphate phosphatase activity"/>
    <property type="evidence" value="ECO:0007669"/>
    <property type="project" value="UniProtKB-UniRule"/>
</dbReference>
<dbReference type="GO" id="GO:0017111">
    <property type="term" value="F:ribonucleoside triphosphate phosphatase activity"/>
    <property type="evidence" value="ECO:0007669"/>
    <property type="project" value="UniProtKB-UniRule"/>
</dbReference>
<dbReference type="Gene3D" id="2.40.380.10">
    <property type="entry name" value="FomD-like"/>
    <property type="match status" value="1"/>
</dbReference>
<dbReference type="HAMAP" id="MF_01568">
    <property type="entry name" value="Ntdp"/>
    <property type="match status" value="1"/>
</dbReference>
<dbReference type="InterPro" id="IPR007295">
    <property type="entry name" value="DUF402"/>
</dbReference>
<dbReference type="InterPro" id="IPR035930">
    <property type="entry name" value="FomD-like_sf"/>
</dbReference>
<dbReference type="InterPro" id="IPR050212">
    <property type="entry name" value="Ntdp-like"/>
</dbReference>
<dbReference type="InterPro" id="IPR016882">
    <property type="entry name" value="SA1684"/>
</dbReference>
<dbReference type="NCBIfam" id="NF010183">
    <property type="entry name" value="PRK13662.1"/>
    <property type="match status" value="1"/>
</dbReference>
<dbReference type="PANTHER" id="PTHR39159">
    <property type="match status" value="1"/>
</dbReference>
<dbReference type="PANTHER" id="PTHR39159:SF1">
    <property type="entry name" value="UPF0374 PROTEIN YGAC"/>
    <property type="match status" value="1"/>
</dbReference>
<dbReference type="Pfam" id="PF04167">
    <property type="entry name" value="DUF402"/>
    <property type="match status" value="1"/>
</dbReference>
<dbReference type="PIRSF" id="PIRSF028345">
    <property type="entry name" value="UCP028345"/>
    <property type="match status" value="1"/>
</dbReference>
<dbReference type="SUPFAM" id="SSF159234">
    <property type="entry name" value="FomD-like"/>
    <property type="match status" value="1"/>
</dbReference>
<feature type="chain" id="PRO_0000248120" description="Nucleoside triphosphate/diphosphate phosphatase">
    <location>
        <begin position="1"/>
        <end position="177"/>
    </location>
</feature>
<feature type="active site" description="Proton donor" evidence="1">
    <location>
        <position position="23"/>
    </location>
</feature>
<feature type="binding site" evidence="1">
    <location>
        <position position="87"/>
    </location>
    <ligand>
        <name>Mg(2+)</name>
        <dbReference type="ChEBI" id="CHEBI:18420"/>
        <label>1</label>
    </ligand>
</feature>
<feature type="binding site" evidence="1">
    <location>
        <position position="103"/>
    </location>
    <ligand>
        <name>Mg(2+)</name>
        <dbReference type="ChEBI" id="CHEBI:18420"/>
        <label>1</label>
    </ligand>
</feature>
<feature type="binding site" evidence="1">
    <location>
        <position position="105"/>
    </location>
    <ligand>
        <name>Mg(2+)</name>
        <dbReference type="ChEBI" id="CHEBI:18420"/>
        <label>2</label>
    </ligand>
</feature>
<feature type="binding site" evidence="1">
    <location>
        <position position="107"/>
    </location>
    <ligand>
        <name>Mg(2+)</name>
        <dbReference type="ChEBI" id="CHEBI:18420"/>
        <label>1</label>
    </ligand>
</feature>
<feature type="binding site" evidence="1">
    <location>
        <position position="107"/>
    </location>
    <ligand>
        <name>Mg(2+)</name>
        <dbReference type="ChEBI" id="CHEBI:18420"/>
        <label>2</label>
    </ligand>
</feature>
<feature type="binding site" evidence="1">
    <location>
        <position position="120"/>
    </location>
    <ligand>
        <name>Mg(2+)</name>
        <dbReference type="ChEBI" id="CHEBI:18420"/>
        <label>2</label>
    </ligand>
</feature>
<feature type="binding site" evidence="1">
    <location>
        <position position="123"/>
    </location>
    <ligand>
        <name>Mg(2+)</name>
        <dbReference type="ChEBI" id="CHEBI:18420"/>
        <label>2</label>
    </ligand>
</feature>
<gene>
    <name type="ordered locus">SMU_1781</name>
</gene>
<sequence length="177" mass="21005">MKLPKEGDFITIQSYKHDGSLHRTWRDTMVLKTTENAVIGVNDHTLVTESDGRRWVTREPAIVYFHKKFWFNIIAMIRDNGVSYYCNLASPYIMDQEALKYIDYDLDVKVFADGEKKLLDVDEYELHKQKMGYSSDIDYILKENVKILVDWINNGKGPFSQSYINIWYKRYLELKNR</sequence>